<comment type="function">
    <text evidence="1">Regulates membrane-cell wall junctions and localized cell wall deposition. Required for establishment of the Casparian strip membrane domain (CSD) and the subsequent formation of Casparian strips, a cell wall modification of the root endodermis that determines an apoplastic barrier between the intraorganismal apoplasm and the extraorganismal apoplasm and prevents lateral diffusion (By similarity).</text>
</comment>
<comment type="subunit">
    <text evidence="1">Homodimer and heterodimers.</text>
</comment>
<comment type="subcellular location">
    <subcellularLocation>
        <location evidence="1">Cell membrane</location>
        <topology evidence="1">Multi-pass membrane protein</topology>
    </subcellularLocation>
    <text evidence="1">Very restricted localization following a belt shape within the plasma membrane which coincides with the position of the Casparian strip membrane domain in the root endodermis.</text>
</comment>
<comment type="similarity">
    <text evidence="3">Belongs to the Casparian strip membrane proteins (CASP) family.</text>
</comment>
<feature type="chain" id="PRO_0000412209" description="Casparian strip membrane protein 1">
    <location>
        <begin position="1"/>
        <end position="189"/>
    </location>
</feature>
<feature type="topological domain" description="Cytoplasmic" evidence="2">
    <location>
        <begin position="1"/>
        <end position="25"/>
    </location>
</feature>
<feature type="transmembrane region" description="Helical" evidence="2">
    <location>
        <begin position="26"/>
        <end position="46"/>
    </location>
</feature>
<feature type="topological domain" description="Extracellular" evidence="2">
    <location>
        <begin position="47"/>
        <end position="73"/>
    </location>
</feature>
<feature type="transmembrane region" description="Helical" evidence="2">
    <location>
        <begin position="74"/>
        <end position="94"/>
    </location>
</feature>
<feature type="topological domain" description="Cytoplasmic" evidence="2">
    <location>
        <begin position="95"/>
        <end position="108"/>
    </location>
</feature>
<feature type="transmembrane region" description="Helical" evidence="2">
    <location>
        <begin position="109"/>
        <end position="129"/>
    </location>
</feature>
<feature type="topological domain" description="Extracellular" evidence="2">
    <location>
        <begin position="130"/>
        <end position="158"/>
    </location>
</feature>
<feature type="transmembrane region" description="Helical" evidence="2">
    <location>
        <begin position="159"/>
        <end position="179"/>
    </location>
</feature>
<feature type="topological domain" description="Cytoplasmic" evidence="2">
    <location>
        <begin position="180"/>
        <end position="189"/>
    </location>
</feature>
<feature type="glycosylation site" description="N-linked (GlcNAc...) asparagine" evidence="2">
    <location>
        <position position="52"/>
    </location>
</feature>
<keyword id="KW-1003">Cell membrane</keyword>
<keyword id="KW-0961">Cell wall biogenesis/degradation</keyword>
<keyword id="KW-0325">Glycoprotein</keyword>
<keyword id="KW-0472">Membrane</keyword>
<keyword id="KW-0812">Transmembrane</keyword>
<keyword id="KW-1133">Transmembrane helix</keyword>
<sequence>MMQAESGSAEAKGPLPPPVGRKRRGLGILDFLLRLLAIGATLSAAITMGTTNETLQFFTQFFQFKARFYDLSAFIYFVIANAIVGGYLLLSLPISILNIVRPRAASSRVFLIFFDTVMVAVCTSGAAAAVAILYVARKGNSRTNWFAICQRFNSFCNQAIGAVSASFAGVVFLILLVLLSASTLYRRRP</sequence>
<protein>
    <recommendedName>
        <fullName>Casparian strip membrane protein 1</fullName>
        <shortName>PgCASP1</shortName>
    </recommendedName>
</protein>
<accession>P0DH81</accession>
<name>CASP1_PICGL</name>
<dbReference type="EMBL" id="CO480275">
    <property type="status" value="NOT_ANNOTATED_CDS"/>
    <property type="molecule type" value="mRNA"/>
</dbReference>
<dbReference type="GO" id="GO:0005886">
    <property type="term" value="C:plasma membrane"/>
    <property type="evidence" value="ECO:0007669"/>
    <property type="project" value="UniProtKB-SubCell"/>
</dbReference>
<dbReference type="GO" id="GO:0071555">
    <property type="term" value="P:cell wall organization"/>
    <property type="evidence" value="ECO:0007669"/>
    <property type="project" value="UniProtKB-KW"/>
</dbReference>
<dbReference type="InterPro" id="IPR006459">
    <property type="entry name" value="CASP/CASPL"/>
</dbReference>
<dbReference type="InterPro" id="IPR006702">
    <property type="entry name" value="CASP_dom"/>
</dbReference>
<dbReference type="InterPro" id="IPR044173">
    <property type="entry name" value="CASPL"/>
</dbReference>
<dbReference type="NCBIfam" id="TIGR01569">
    <property type="entry name" value="A_tha_TIGR01569"/>
    <property type="match status" value="1"/>
</dbReference>
<dbReference type="PANTHER" id="PTHR36488:SF11">
    <property type="entry name" value="CASP-LIKE PROTEIN"/>
    <property type="match status" value="1"/>
</dbReference>
<dbReference type="PANTHER" id="PTHR36488">
    <property type="entry name" value="CASP-LIKE PROTEIN 1U1"/>
    <property type="match status" value="1"/>
</dbReference>
<dbReference type="Pfam" id="PF04535">
    <property type="entry name" value="CASP_dom"/>
    <property type="match status" value="1"/>
</dbReference>
<evidence type="ECO:0000250" key="1"/>
<evidence type="ECO:0000255" key="2"/>
<evidence type="ECO:0000305" key="3"/>
<proteinExistence type="evidence at transcript level"/>
<organism>
    <name type="scientific">Picea glauca</name>
    <name type="common">White spruce</name>
    <name type="synonym">Pinus glauca</name>
    <dbReference type="NCBI Taxonomy" id="3330"/>
    <lineage>
        <taxon>Eukaryota</taxon>
        <taxon>Viridiplantae</taxon>
        <taxon>Streptophyta</taxon>
        <taxon>Embryophyta</taxon>
        <taxon>Tracheophyta</taxon>
        <taxon>Spermatophyta</taxon>
        <taxon>Pinopsida</taxon>
        <taxon>Pinidae</taxon>
        <taxon>Conifers I</taxon>
        <taxon>Pinales</taxon>
        <taxon>Pinaceae</taxon>
        <taxon>Picea</taxon>
    </lineage>
</organism>
<reference key="1">
    <citation type="submission" date="2004-07" db="EMBL/GenBank/DDBJ databases">
        <title>Arborea EST sequencing in Picea glauca (white spruce).</title>
        <authorList>
            <person name="Morency M.-J."/>
            <person name="Cooke J."/>
            <person name="Pavy N."/>
            <person name="Parsons L."/>
            <person name="Paule C."/>
            <person name="Seguin A."/>
            <person name="Retzel E."/>
            <person name="Butterfield Y."/>
            <person name="Barber S."/>
            <person name="Yang G."/>
            <person name="Stott J."/>
            <person name="Siddiqui A."/>
            <person name="Holt R."/>
            <person name="Marra M."/>
            <person name="MacKay J."/>
        </authorList>
    </citation>
    <scope>NUCLEOTIDE SEQUENCE [LARGE SCALE MRNA]</scope>
    <source>
        <tissue>Root</tissue>
    </source>
</reference>
<reference key="2">
    <citation type="journal article" date="2014" name="Plant Physiol.">
        <title>Functional and evolutionary analysis of the CASPARIAN STRIP MEMBRANE DOMAIN PROTEIN family.</title>
        <authorList>
            <person name="Roppolo D."/>
            <person name="Boeckmann B."/>
            <person name="Pfister A."/>
            <person name="Boutet E."/>
            <person name="Rubio M.C."/>
            <person name="Denervaud-Tendon V."/>
            <person name="Vermeer J.E."/>
            <person name="Gheyselinck J."/>
            <person name="Xenarios I."/>
            <person name="Geldner N."/>
        </authorList>
    </citation>
    <scope>GENE FAMILY</scope>
    <scope>NOMENCLATURE</scope>
</reference>